<reference key="1">
    <citation type="journal article" date="1996" name="J. Exp. Bot.">
        <title>Promoter trapping in Arabidopsis-one T-DNA tag, three transcripts and two thiolase genes.</title>
        <authorList>
            <person name="Ferreira da Rocha P.S.C."/>
            <person name="Topping J.F."/>
            <person name="Lindsey K."/>
        </authorList>
    </citation>
    <scope>NUCLEOTIDE SEQUENCE [GENOMIC DNA / MRNA] (ISOFORMS 1 AND 2)</scope>
    <source>
        <strain>cv. Columbia</strain>
        <tissue>Aerial part</tissue>
    </source>
</reference>
<reference key="2">
    <citation type="journal article" date="1998" name="DNA Res.">
        <title>Structural analysis of Arabidopsis thaliana chromosome 5. VI. Sequence features of the regions of 1,367,185 bp covered by 19 physically assigned P1 and TAC clones.</title>
        <authorList>
            <person name="Kotani H."/>
            <person name="Nakamura Y."/>
            <person name="Sato S."/>
            <person name="Asamizu E."/>
            <person name="Kaneko T."/>
            <person name="Miyajima N."/>
            <person name="Tabata S."/>
        </authorList>
    </citation>
    <scope>NUCLEOTIDE SEQUENCE [LARGE SCALE GENOMIC DNA]</scope>
    <source>
        <strain>cv. Columbia</strain>
    </source>
</reference>
<reference key="3">
    <citation type="journal article" date="2017" name="Plant J.">
        <title>Araport11: a complete reannotation of the Arabidopsis thaliana reference genome.</title>
        <authorList>
            <person name="Cheng C.Y."/>
            <person name="Krishnakumar V."/>
            <person name="Chan A.P."/>
            <person name="Thibaud-Nissen F."/>
            <person name="Schobel S."/>
            <person name="Town C.D."/>
        </authorList>
    </citation>
    <scope>GENOME REANNOTATION</scope>
    <source>
        <strain>cv. Columbia</strain>
    </source>
</reference>
<reference key="4">
    <citation type="journal article" date="2003" name="Science">
        <title>Empirical analysis of transcriptional activity in the Arabidopsis genome.</title>
        <authorList>
            <person name="Yamada K."/>
            <person name="Lim J."/>
            <person name="Dale J.M."/>
            <person name="Chen H."/>
            <person name="Shinn P."/>
            <person name="Palm C.J."/>
            <person name="Southwick A.M."/>
            <person name="Wu H.C."/>
            <person name="Kim C.J."/>
            <person name="Nguyen M."/>
            <person name="Pham P.K."/>
            <person name="Cheuk R.F."/>
            <person name="Karlin-Newmann G."/>
            <person name="Liu S.X."/>
            <person name="Lam B."/>
            <person name="Sakano H."/>
            <person name="Wu T."/>
            <person name="Yu G."/>
            <person name="Miranda M."/>
            <person name="Quach H.L."/>
            <person name="Tripp M."/>
            <person name="Chang C.H."/>
            <person name="Lee J.M."/>
            <person name="Toriumi M.J."/>
            <person name="Chan M.M."/>
            <person name="Tang C.C."/>
            <person name="Onodera C.S."/>
            <person name="Deng J.M."/>
            <person name="Akiyama K."/>
            <person name="Ansari Y."/>
            <person name="Arakawa T."/>
            <person name="Banh J."/>
            <person name="Banno F."/>
            <person name="Bowser L."/>
            <person name="Brooks S.Y."/>
            <person name="Carninci P."/>
            <person name="Chao Q."/>
            <person name="Choy N."/>
            <person name="Enju A."/>
            <person name="Goldsmith A.D."/>
            <person name="Gurjal M."/>
            <person name="Hansen N.F."/>
            <person name="Hayashizaki Y."/>
            <person name="Johnson-Hopson C."/>
            <person name="Hsuan V.W."/>
            <person name="Iida K."/>
            <person name="Karnes M."/>
            <person name="Khan S."/>
            <person name="Koesema E."/>
            <person name="Ishida J."/>
            <person name="Jiang P.X."/>
            <person name="Jones T."/>
            <person name="Kawai J."/>
            <person name="Kamiya A."/>
            <person name="Meyers C."/>
            <person name="Nakajima M."/>
            <person name="Narusaka M."/>
            <person name="Seki M."/>
            <person name="Sakurai T."/>
            <person name="Satou M."/>
            <person name="Tamse R."/>
            <person name="Vaysberg M."/>
            <person name="Wallender E.K."/>
            <person name="Wong C."/>
            <person name="Yamamura Y."/>
            <person name="Yuan S."/>
            <person name="Shinozaki K."/>
            <person name="Davis R.W."/>
            <person name="Theologis A."/>
            <person name="Ecker J.R."/>
        </authorList>
    </citation>
    <scope>NUCLEOTIDE SEQUENCE [LARGE SCALE MRNA] (ISOFORMS 1 AND 2)</scope>
    <source>
        <strain>cv. Columbia</strain>
    </source>
</reference>
<reference key="5">
    <citation type="submission" date="2005-03" db="EMBL/GenBank/DDBJ databases">
        <title>Large-scale analysis of RIKEN Arabidopsis full-length (RAFL) cDNAs.</title>
        <authorList>
            <person name="Totoki Y."/>
            <person name="Seki M."/>
            <person name="Ishida J."/>
            <person name="Nakajima M."/>
            <person name="Enju A."/>
            <person name="Kamiya A."/>
            <person name="Narusaka M."/>
            <person name="Shin-i T."/>
            <person name="Nakagawa M."/>
            <person name="Sakamoto N."/>
            <person name="Oishi K."/>
            <person name="Kohara Y."/>
            <person name="Kobayashi M."/>
            <person name="Toyoda A."/>
            <person name="Sakaki Y."/>
            <person name="Sakurai T."/>
            <person name="Iida K."/>
            <person name="Akiyama K."/>
            <person name="Satou M."/>
            <person name="Toyoda T."/>
            <person name="Konagaya A."/>
            <person name="Carninci P."/>
            <person name="Kawai J."/>
            <person name="Hayashizaki Y."/>
            <person name="Shinozaki K."/>
        </authorList>
    </citation>
    <scope>NUCLEOTIDE SEQUENCE [LARGE SCALE MRNA] OF 245-457</scope>
    <source>
        <strain>cv. Columbia</strain>
    </source>
</reference>
<reference key="6">
    <citation type="journal article" date="2001" name="Plant J.">
        <title>Requirement for 3-ketoacyl-CoA thiolase-2 in peroxisome development, fatty acid beta-oxidation and breakdown of triacylglycerol in lipid bodies of Arabidopsis seedlings.</title>
        <authorList>
            <person name="Germain V."/>
            <person name="Rylott E.L."/>
            <person name="Larson T.R."/>
            <person name="Sherson S.M."/>
            <person name="Bechtold N."/>
            <person name="Carde J.-P."/>
            <person name="Bryce J.H."/>
            <person name="Graham I.A."/>
            <person name="Smith S.M."/>
        </authorList>
    </citation>
    <scope>FUNCTION</scope>
    <scope>TISSUE SPECIFICITY</scope>
</reference>
<reference key="7">
    <citation type="journal article" date="2002" name="Plant Physiol.">
        <title>Evidence supporting a role of jasmonic acid in Arabidopsis leaf senescence.</title>
        <authorList>
            <person name="He Y."/>
            <person name="Fukushige H."/>
            <person name="Hildebrand D.F."/>
            <person name="Gan S."/>
        </authorList>
    </citation>
    <scope>DEVELOPMENTAL STAGE</scope>
</reference>
<reference key="8">
    <citation type="journal article" date="2004" name="Plant Physiol.">
        <title>Gene-specific involvement of beta-oxidation in wound-activated responses in Arabidopsis.</title>
        <authorList>
            <person name="Cruz-Castillo M."/>
            <person name="Martinez C."/>
            <person name="Buchala A."/>
            <person name="Metraux J.-P."/>
            <person name="Leon J."/>
        </authorList>
    </citation>
    <scope>FUNCTION</scope>
    <scope>TISSUE SPECIFICITY</scope>
    <scope>INDUCTION</scope>
</reference>
<reference key="9">
    <citation type="journal article" date="2007" name="Plant Cell">
        <title>Proteome analysis of Arabidopsis leaf peroxisomes reveals novel targeting peptides, metabolic pathways, and defense mechanisms.</title>
        <authorList>
            <person name="Reumann S."/>
            <person name="Babujee L."/>
            <person name="Ma C."/>
            <person name="Wienkoop S."/>
            <person name="Siemsen T."/>
            <person name="Antonicelli G.E."/>
            <person name="Rasche N."/>
            <person name="Lueder F."/>
            <person name="Weckwerth W."/>
            <person name="Jahn O."/>
        </authorList>
    </citation>
    <scope>IDENTIFICATION BY MASS SPECTROMETRY</scope>
</reference>
<organism>
    <name type="scientific">Arabidopsis thaliana</name>
    <name type="common">Mouse-ear cress</name>
    <dbReference type="NCBI Taxonomy" id="3702"/>
    <lineage>
        <taxon>Eukaryota</taxon>
        <taxon>Viridiplantae</taxon>
        <taxon>Streptophyta</taxon>
        <taxon>Embryophyta</taxon>
        <taxon>Tracheophyta</taxon>
        <taxon>Spermatophyta</taxon>
        <taxon>Magnoliopsida</taxon>
        <taxon>eudicotyledons</taxon>
        <taxon>Gunneridae</taxon>
        <taxon>Pentapetalae</taxon>
        <taxon>rosids</taxon>
        <taxon>malvids</taxon>
        <taxon>Brassicales</taxon>
        <taxon>Brassicaceae</taxon>
        <taxon>Camelineae</taxon>
        <taxon>Arabidopsis</taxon>
    </lineage>
</organism>
<sequence>MERAMERQKILLRHLNPVSSSNSSLKHEPSLLSPVNCVSEVSPMAAFGDDIVIVAAYRTAICKARRGGFKDTLPDDLLASVLKAVVERTSLDPSEVGDIVVGTVIAPGSQRAMECRVAAYFAGFPDSVPVRTVNRQCSSGLQAVADVAASIRAGYYDIGIGAGVESMSTDHIPGGGFHGSNPRAQDFPKARDCLLPMGITSENVAERFGVTREEQDMAAVESHKRAAAAIASGKLKDEIIPVATKIVDPETKAEKAIVVSVDDGVRPNSNMADLAKLKTVFKQNGSTTAGNASQISDGAGAVLLMKRSLAMKKGLPILGVFRSFAVTGVEPSVMGIGPAVAIPAATKLAGLNVSDIDLFEINEAFASQYVYSCKKLELDMEKVNVNGGAIAIGHPLGATGARCVATLLHEMKRRGKDCRFGVISMCIGTGMGAAAVFERGDSVDNLSNARVANGDSH</sequence>
<proteinExistence type="evidence at protein level"/>
<comment type="function">
    <text evidence="4 6">Probably involved in long chain fatty-acid beta-oxidation prior to gluconeogenesis during germination and subsequent seedling growth. Involved in systemic jasmonic acid (JA) biosynthesis after wounding and may be during senescence.</text>
</comment>
<comment type="catalytic activity">
    <reaction>
        <text>an acyl-CoA + acetyl-CoA = a 3-oxoacyl-CoA + CoA</text>
        <dbReference type="Rhea" id="RHEA:21564"/>
        <dbReference type="ChEBI" id="CHEBI:57287"/>
        <dbReference type="ChEBI" id="CHEBI:57288"/>
        <dbReference type="ChEBI" id="CHEBI:58342"/>
        <dbReference type="ChEBI" id="CHEBI:90726"/>
        <dbReference type="EC" id="2.3.1.16"/>
    </reaction>
</comment>
<comment type="pathway">
    <text>Lipid metabolism; fatty acid metabolism.</text>
</comment>
<comment type="subunit">
    <text evidence="1">Homodimer.</text>
</comment>
<comment type="subcellular location">
    <subcellularLocation>
        <location evidence="9">Peroxisome</location>
    </subcellularLocation>
</comment>
<comment type="alternative products">
    <event type="alternative splicing"/>
    <isoform>
        <id>Q570C8-1</id>
        <name>1</name>
        <name>PKT2</name>
        <sequence type="displayed"/>
    </isoform>
    <isoform>
        <id>Q570C8-2</id>
        <name>2</name>
        <name>PKT1</name>
        <sequence type="described" ref="VSP_015460"/>
    </isoform>
</comment>
<comment type="tissue specificity">
    <text evidence="4 6">Expressed in seedlings and wounded leaves.</text>
</comment>
<comment type="developmental stage">
    <text evidence="5">Slightly induced in leaves during senescence.</text>
</comment>
<comment type="induction">
    <text evidence="6">Induced by jasmonic acid (JA) and systemically by wounding. Slightly induced by dehydration.</text>
</comment>
<comment type="similarity">
    <text evidence="9">Belongs to the thiolase-like superfamily. Thiolase family.</text>
</comment>
<dbReference type="EC" id="2.3.1.16"/>
<dbReference type="EMBL" id="AF062589">
    <property type="protein sequence ID" value="AAC17876.1"/>
    <property type="molecule type" value="Genomic_DNA"/>
</dbReference>
<dbReference type="EMBL" id="AF062589">
    <property type="protein sequence ID" value="AAC17877.1"/>
    <property type="molecule type" value="Genomic_DNA"/>
</dbReference>
<dbReference type="EMBL" id="AF062590">
    <property type="protein sequence ID" value="AAC19122.1"/>
    <property type="molecule type" value="mRNA"/>
</dbReference>
<dbReference type="EMBL" id="AF062591">
    <property type="protein sequence ID" value="AAC23571.1"/>
    <property type="molecule type" value="mRNA"/>
</dbReference>
<dbReference type="EMBL" id="AB012242">
    <property type="protein sequence ID" value="BAB09441.1"/>
    <property type="molecule type" value="Genomic_DNA"/>
</dbReference>
<dbReference type="EMBL" id="CP002688">
    <property type="protein sequence ID" value="AED95736.1"/>
    <property type="molecule type" value="Genomic_DNA"/>
</dbReference>
<dbReference type="EMBL" id="CP002688">
    <property type="protein sequence ID" value="AED95737.1"/>
    <property type="molecule type" value="Genomic_DNA"/>
</dbReference>
<dbReference type="EMBL" id="CP002688">
    <property type="protein sequence ID" value="AED95738.1"/>
    <property type="molecule type" value="Genomic_DNA"/>
</dbReference>
<dbReference type="EMBL" id="CP002688">
    <property type="protein sequence ID" value="ANM70210.1"/>
    <property type="molecule type" value="Genomic_DNA"/>
</dbReference>
<dbReference type="EMBL" id="AY079026">
    <property type="protein sequence ID" value="AAL84980.1"/>
    <property type="molecule type" value="mRNA"/>
</dbReference>
<dbReference type="EMBL" id="AY136455">
    <property type="protein sequence ID" value="AAM97120.1"/>
    <property type="molecule type" value="mRNA"/>
</dbReference>
<dbReference type="EMBL" id="BT002594">
    <property type="protein sequence ID" value="AAO00954.1"/>
    <property type="molecule type" value="mRNA"/>
</dbReference>
<dbReference type="EMBL" id="AK220781">
    <property type="protein sequence ID" value="BAD94007.1"/>
    <property type="molecule type" value="mRNA"/>
</dbReference>
<dbReference type="PIR" id="T52165">
    <property type="entry name" value="T52165"/>
</dbReference>
<dbReference type="RefSeq" id="NP_001032037.1">
    <molecule id="Q570C8-1"/>
    <property type="nucleotide sequence ID" value="NM_001036960.2"/>
</dbReference>
<dbReference type="RefSeq" id="NP_001331840.1">
    <molecule id="Q570C8-1"/>
    <property type="nucleotide sequence ID" value="NM_001344808.1"/>
</dbReference>
<dbReference type="RefSeq" id="NP_568704.2">
    <molecule id="Q570C8-1"/>
    <property type="nucleotide sequence ID" value="NM_124265.5"/>
</dbReference>
<dbReference type="RefSeq" id="NP_851157.1">
    <molecule id="Q570C8-2"/>
    <property type="nucleotide sequence ID" value="NM_180826.4"/>
</dbReference>
<dbReference type="SMR" id="Q570C8"/>
<dbReference type="FunCoup" id="Q570C8">
    <property type="interactions" value="1517"/>
</dbReference>
<dbReference type="STRING" id="3702.Q570C8"/>
<dbReference type="iPTMnet" id="Q570C8"/>
<dbReference type="PaxDb" id="3702-AT5G48880.2"/>
<dbReference type="ProteomicsDB" id="234366">
    <molecule id="Q570C8-1"/>
</dbReference>
<dbReference type="EnsemblPlants" id="AT5G48880.1">
    <molecule id="Q570C8-2"/>
    <property type="protein sequence ID" value="AT5G48880.1"/>
    <property type="gene ID" value="AT5G48880"/>
</dbReference>
<dbReference type="EnsemblPlants" id="AT5G48880.2">
    <molecule id="Q570C8-1"/>
    <property type="protein sequence ID" value="AT5G48880.2"/>
    <property type="gene ID" value="AT5G48880"/>
</dbReference>
<dbReference type="EnsemblPlants" id="AT5G48880.3">
    <molecule id="Q570C8-1"/>
    <property type="protein sequence ID" value="AT5G48880.3"/>
    <property type="gene ID" value="AT5G48880"/>
</dbReference>
<dbReference type="EnsemblPlants" id="AT5G48880.4">
    <molecule id="Q570C8-1"/>
    <property type="protein sequence ID" value="AT5G48880.4"/>
    <property type="gene ID" value="AT5G48880"/>
</dbReference>
<dbReference type="GeneID" id="834946"/>
<dbReference type="Gramene" id="AT5G48880.1">
    <molecule id="Q570C8-2"/>
    <property type="protein sequence ID" value="AT5G48880.1"/>
    <property type="gene ID" value="AT5G48880"/>
</dbReference>
<dbReference type="Gramene" id="AT5G48880.2">
    <molecule id="Q570C8-1"/>
    <property type="protein sequence ID" value="AT5G48880.2"/>
    <property type="gene ID" value="AT5G48880"/>
</dbReference>
<dbReference type="Gramene" id="AT5G48880.3">
    <molecule id="Q570C8-1"/>
    <property type="protein sequence ID" value="AT5G48880.3"/>
    <property type="gene ID" value="AT5G48880"/>
</dbReference>
<dbReference type="Gramene" id="AT5G48880.4">
    <molecule id="Q570C8-1"/>
    <property type="protein sequence ID" value="AT5G48880.4"/>
    <property type="gene ID" value="AT5G48880"/>
</dbReference>
<dbReference type="KEGG" id="ath:AT5G48880"/>
<dbReference type="Araport" id="AT5G48880"/>
<dbReference type="TAIR" id="AT5G48880">
    <property type="gene designation" value="KAT5"/>
</dbReference>
<dbReference type="eggNOG" id="KOG1389">
    <property type="taxonomic scope" value="Eukaryota"/>
</dbReference>
<dbReference type="InParanoid" id="Q570C8"/>
<dbReference type="OrthoDB" id="5404651at2759"/>
<dbReference type="PhylomeDB" id="Q570C8"/>
<dbReference type="BioCyc" id="ARA:AT5G48880-MONOMER"/>
<dbReference type="UniPathway" id="UPA00199"/>
<dbReference type="PRO" id="PR:Q570C8"/>
<dbReference type="Proteomes" id="UP000006548">
    <property type="component" value="Chromosome 5"/>
</dbReference>
<dbReference type="ExpressionAtlas" id="Q570C8">
    <property type="expression patterns" value="baseline and differential"/>
</dbReference>
<dbReference type="GO" id="GO:0005777">
    <property type="term" value="C:peroxisome"/>
    <property type="evidence" value="ECO:0007005"/>
    <property type="project" value="TAIR"/>
</dbReference>
<dbReference type="GO" id="GO:0003988">
    <property type="term" value="F:acetyl-CoA C-acyltransferase activity"/>
    <property type="evidence" value="ECO:0007669"/>
    <property type="project" value="UniProtKB-EC"/>
</dbReference>
<dbReference type="GO" id="GO:0006633">
    <property type="term" value="P:fatty acid biosynthetic process"/>
    <property type="evidence" value="ECO:0007669"/>
    <property type="project" value="UniProtKB-KW"/>
</dbReference>
<dbReference type="GO" id="GO:0031408">
    <property type="term" value="P:oxylipin biosynthetic process"/>
    <property type="evidence" value="ECO:0007669"/>
    <property type="project" value="UniProtKB-KW"/>
</dbReference>
<dbReference type="CDD" id="cd00751">
    <property type="entry name" value="thiolase"/>
    <property type="match status" value="1"/>
</dbReference>
<dbReference type="FunFam" id="3.40.47.10:FF:000032">
    <property type="entry name" value="Peroxisomal 3-ketoacyl-CoA thiolase"/>
    <property type="match status" value="1"/>
</dbReference>
<dbReference type="Gene3D" id="3.40.47.10">
    <property type="match status" value="1"/>
</dbReference>
<dbReference type="InterPro" id="IPR002155">
    <property type="entry name" value="Thiolase"/>
</dbReference>
<dbReference type="InterPro" id="IPR016039">
    <property type="entry name" value="Thiolase-like"/>
</dbReference>
<dbReference type="InterPro" id="IPR050215">
    <property type="entry name" value="Thiolase-like_sf_Thiolase"/>
</dbReference>
<dbReference type="InterPro" id="IPR020615">
    <property type="entry name" value="Thiolase_acyl_enz_int_AS"/>
</dbReference>
<dbReference type="InterPro" id="IPR020610">
    <property type="entry name" value="Thiolase_AS"/>
</dbReference>
<dbReference type="InterPro" id="IPR020617">
    <property type="entry name" value="Thiolase_C"/>
</dbReference>
<dbReference type="InterPro" id="IPR020613">
    <property type="entry name" value="Thiolase_CS"/>
</dbReference>
<dbReference type="InterPro" id="IPR020616">
    <property type="entry name" value="Thiolase_N"/>
</dbReference>
<dbReference type="NCBIfam" id="TIGR01930">
    <property type="entry name" value="AcCoA-C-Actrans"/>
    <property type="match status" value="1"/>
</dbReference>
<dbReference type="PANTHER" id="PTHR43853:SF15">
    <property type="entry name" value="3-KETOACYL-COA THIOLASE 5, PEROXISOMAL"/>
    <property type="match status" value="1"/>
</dbReference>
<dbReference type="PANTHER" id="PTHR43853">
    <property type="entry name" value="3-KETOACYL-COA THIOLASE, PEROXISOMAL"/>
    <property type="match status" value="1"/>
</dbReference>
<dbReference type="Pfam" id="PF02803">
    <property type="entry name" value="Thiolase_C"/>
    <property type="match status" value="1"/>
</dbReference>
<dbReference type="Pfam" id="PF00108">
    <property type="entry name" value="Thiolase_N"/>
    <property type="match status" value="1"/>
</dbReference>
<dbReference type="SUPFAM" id="SSF53901">
    <property type="entry name" value="Thiolase-like"/>
    <property type="match status" value="2"/>
</dbReference>
<dbReference type="PROSITE" id="PS00098">
    <property type="entry name" value="THIOLASE_1"/>
    <property type="match status" value="1"/>
</dbReference>
<dbReference type="PROSITE" id="PS00737">
    <property type="entry name" value="THIOLASE_2"/>
    <property type="match status" value="1"/>
</dbReference>
<dbReference type="PROSITE" id="PS00099">
    <property type="entry name" value="THIOLASE_3"/>
    <property type="match status" value="1"/>
</dbReference>
<gene>
    <name type="primary">KAT5</name>
    <name type="ordered locus">At5g48880</name>
    <name type="ORF">K24G6.22</name>
</gene>
<evidence type="ECO:0000250" key="1"/>
<evidence type="ECO:0000255" key="2"/>
<evidence type="ECO:0000255" key="3">
    <source>
        <dbReference type="PROSITE-ProRule" id="PRU10020"/>
    </source>
</evidence>
<evidence type="ECO:0000269" key="4">
    <source>
    </source>
</evidence>
<evidence type="ECO:0000269" key="5">
    <source>
    </source>
</evidence>
<evidence type="ECO:0000269" key="6">
    <source>
    </source>
</evidence>
<evidence type="ECO:0000303" key="7">
    <source>
    </source>
</evidence>
<evidence type="ECO:0000303" key="8">
    <source ref="1"/>
</evidence>
<evidence type="ECO:0000305" key="9"/>
<feature type="transit peptide" description="Peroxisome" evidence="2">
    <location>
        <begin position="1"/>
        <end position="37"/>
    </location>
</feature>
<feature type="chain" id="PRO_0000034074" description="3-ketoacyl-CoA thiolase 5, peroxisomal">
    <location>
        <begin position="38"/>
        <end position="457"/>
    </location>
</feature>
<feature type="active site" description="Acyl-thioester intermediate" evidence="1">
    <location>
        <position position="137"/>
    </location>
</feature>
<feature type="active site" description="Proton acceptor" evidence="3">
    <location>
        <position position="394"/>
    </location>
</feature>
<feature type="active site" description="Proton acceptor" evidence="3">
    <location>
        <position position="426"/>
    </location>
</feature>
<feature type="splice variant" id="VSP_015460" description="In isoform 2." evidence="7 8">
    <location>
        <begin position="1"/>
        <end position="43"/>
    </location>
</feature>
<protein>
    <recommendedName>
        <fullName>3-ketoacyl-CoA thiolase 5, peroxisomal</fullName>
        <ecNumber>2.3.1.16</ecNumber>
    </recommendedName>
    <alternativeName>
        <fullName>Acetyl-CoA acyltransferase 5</fullName>
    </alternativeName>
    <alternativeName>
        <fullName>Beta-ketothiolase 5</fullName>
    </alternativeName>
    <alternativeName>
        <fullName>Peroxisomal 3-oxoacyl-CoA thiolase 5</fullName>
    </alternativeName>
</protein>
<accession>Q570C8</accession>
<accession>O65339</accession>
<accession>Q9S774</accession>
<name>THIK5_ARATH</name>
<keyword id="KW-0012">Acyltransferase</keyword>
<keyword id="KW-0025">Alternative splicing</keyword>
<keyword id="KW-0275">Fatty acid biosynthesis</keyword>
<keyword id="KW-0276">Fatty acid metabolism</keyword>
<keyword id="KW-0444">Lipid biosynthesis</keyword>
<keyword id="KW-0443">Lipid metabolism</keyword>
<keyword id="KW-0925">Oxylipin biosynthesis</keyword>
<keyword id="KW-0576">Peroxisome</keyword>
<keyword id="KW-1185">Reference proteome</keyword>
<keyword id="KW-0808">Transferase</keyword>
<keyword id="KW-0809">Transit peptide</keyword>